<proteinExistence type="inferred from homology"/>
<feature type="chain" id="PRO_0000244962" description="NADH-quinone oxidoreductase subunit H">
    <location>
        <begin position="1"/>
        <end position="363"/>
    </location>
</feature>
<feature type="transmembrane region" description="Helical" evidence="1">
    <location>
        <begin position="62"/>
        <end position="82"/>
    </location>
</feature>
<feature type="transmembrane region" description="Helical" evidence="1">
    <location>
        <begin position="96"/>
        <end position="116"/>
    </location>
</feature>
<feature type="transmembrane region" description="Helical" evidence="1">
    <location>
        <begin position="127"/>
        <end position="147"/>
    </location>
</feature>
<feature type="transmembrane region" description="Helical" evidence="1">
    <location>
        <begin position="163"/>
        <end position="183"/>
    </location>
</feature>
<feature type="transmembrane region" description="Helical" evidence="1">
    <location>
        <begin position="202"/>
        <end position="222"/>
    </location>
</feature>
<feature type="transmembrane region" description="Helical" evidence="1">
    <location>
        <begin position="238"/>
        <end position="257"/>
    </location>
</feature>
<feature type="transmembrane region" description="Helical" evidence="1">
    <location>
        <begin position="264"/>
        <end position="286"/>
    </location>
</feature>
<feature type="transmembrane region" description="Helical" evidence="1">
    <location>
        <begin position="299"/>
        <end position="319"/>
    </location>
</feature>
<feature type="transmembrane region" description="Helical" evidence="1">
    <location>
        <begin position="339"/>
        <end position="359"/>
    </location>
</feature>
<name>NUOH_XANAC</name>
<accession>Q8PJ47</accession>
<organism>
    <name type="scientific">Xanthomonas axonopodis pv. citri (strain 306)</name>
    <dbReference type="NCBI Taxonomy" id="190486"/>
    <lineage>
        <taxon>Bacteria</taxon>
        <taxon>Pseudomonadati</taxon>
        <taxon>Pseudomonadota</taxon>
        <taxon>Gammaproteobacteria</taxon>
        <taxon>Lysobacterales</taxon>
        <taxon>Lysobacteraceae</taxon>
        <taxon>Xanthomonas</taxon>
    </lineage>
</organism>
<protein>
    <recommendedName>
        <fullName evidence="1">NADH-quinone oxidoreductase subunit H</fullName>
        <ecNumber evidence="1">7.1.1.-</ecNumber>
    </recommendedName>
    <alternativeName>
        <fullName evidence="1">NADH dehydrogenase I subunit H</fullName>
    </alternativeName>
    <alternativeName>
        <fullName evidence="1">NDH-1 subunit H</fullName>
    </alternativeName>
</protein>
<dbReference type="EC" id="7.1.1.-" evidence="1"/>
<dbReference type="EMBL" id="AE008923">
    <property type="protein sequence ID" value="AAM37543.1"/>
    <property type="status" value="ALT_INIT"/>
    <property type="molecule type" value="Genomic_DNA"/>
</dbReference>
<dbReference type="RefSeq" id="WP_011051773.1">
    <property type="nucleotide sequence ID" value="NC_003919.1"/>
</dbReference>
<dbReference type="SMR" id="Q8PJ47"/>
<dbReference type="KEGG" id="xac:XAC2697"/>
<dbReference type="eggNOG" id="COG1005">
    <property type="taxonomic scope" value="Bacteria"/>
</dbReference>
<dbReference type="HOGENOM" id="CLU_015134_0_1_6"/>
<dbReference type="Proteomes" id="UP000000576">
    <property type="component" value="Chromosome"/>
</dbReference>
<dbReference type="GO" id="GO:0005886">
    <property type="term" value="C:plasma membrane"/>
    <property type="evidence" value="ECO:0007669"/>
    <property type="project" value="UniProtKB-SubCell"/>
</dbReference>
<dbReference type="GO" id="GO:0003954">
    <property type="term" value="F:NADH dehydrogenase activity"/>
    <property type="evidence" value="ECO:0007669"/>
    <property type="project" value="TreeGrafter"/>
</dbReference>
<dbReference type="GO" id="GO:0016655">
    <property type="term" value="F:oxidoreductase activity, acting on NAD(P)H, quinone or similar compound as acceptor"/>
    <property type="evidence" value="ECO:0007669"/>
    <property type="project" value="UniProtKB-UniRule"/>
</dbReference>
<dbReference type="GO" id="GO:0048038">
    <property type="term" value="F:quinone binding"/>
    <property type="evidence" value="ECO:0007669"/>
    <property type="project" value="UniProtKB-KW"/>
</dbReference>
<dbReference type="GO" id="GO:0009060">
    <property type="term" value="P:aerobic respiration"/>
    <property type="evidence" value="ECO:0007669"/>
    <property type="project" value="TreeGrafter"/>
</dbReference>
<dbReference type="HAMAP" id="MF_01350">
    <property type="entry name" value="NDH1_NuoH"/>
    <property type="match status" value="1"/>
</dbReference>
<dbReference type="InterPro" id="IPR001694">
    <property type="entry name" value="NADH_UbQ_OxRdtase_su1/FPO"/>
</dbReference>
<dbReference type="InterPro" id="IPR018086">
    <property type="entry name" value="NADH_UbQ_OxRdtase_su1_CS"/>
</dbReference>
<dbReference type="NCBIfam" id="NF004741">
    <property type="entry name" value="PRK06076.1-2"/>
    <property type="match status" value="1"/>
</dbReference>
<dbReference type="NCBIfam" id="NF004742">
    <property type="entry name" value="PRK06076.1-3"/>
    <property type="match status" value="1"/>
</dbReference>
<dbReference type="PANTHER" id="PTHR11432">
    <property type="entry name" value="NADH DEHYDROGENASE SUBUNIT 1"/>
    <property type="match status" value="1"/>
</dbReference>
<dbReference type="PANTHER" id="PTHR11432:SF3">
    <property type="entry name" value="NADH-UBIQUINONE OXIDOREDUCTASE CHAIN 1"/>
    <property type="match status" value="1"/>
</dbReference>
<dbReference type="Pfam" id="PF00146">
    <property type="entry name" value="NADHdh"/>
    <property type="match status" value="1"/>
</dbReference>
<dbReference type="PROSITE" id="PS00668">
    <property type="entry name" value="COMPLEX1_ND1_2"/>
    <property type="match status" value="1"/>
</dbReference>
<reference key="1">
    <citation type="journal article" date="2002" name="Nature">
        <title>Comparison of the genomes of two Xanthomonas pathogens with differing host specificities.</title>
        <authorList>
            <person name="da Silva A.C.R."/>
            <person name="Ferro J.A."/>
            <person name="Reinach F.C."/>
            <person name="Farah C.S."/>
            <person name="Furlan L.R."/>
            <person name="Quaggio R.B."/>
            <person name="Monteiro-Vitorello C.B."/>
            <person name="Van Sluys M.A."/>
            <person name="Almeida N.F. Jr."/>
            <person name="Alves L.M.C."/>
            <person name="do Amaral A.M."/>
            <person name="Bertolini M.C."/>
            <person name="Camargo L.E.A."/>
            <person name="Camarotte G."/>
            <person name="Cannavan F."/>
            <person name="Cardozo J."/>
            <person name="Chambergo F."/>
            <person name="Ciapina L.P."/>
            <person name="Cicarelli R.M.B."/>
            <person name="Coutinho L.L."/>
            <person name="Cursino-Santos J.R."/>
            <person name="El-Dorry H."/>
            <person name="Faria J.B."/>
            <person name="Ferreira A.J.S."/>
            <person name="Ferreira R.C.C."/>
            <person name="Ferro M.I.T."/>
            <person name="Formighieri E.F."/>
            <person name="Franco M.C."/>
            <person name="Greggio C.C."/>
            <person name="Gruber A."/>
            <person name="Katsuyama A.M."/>
            <person name="Kishi L.T."/>
            <person name="Leite R.P."/>
            <person name="Lemos E.G.M."/>
            <person name="Lemos M.V.F."/>
            <person name="Locali E.C."/>
            <person name="Machado M.A."/>
            <person name="Madeira A.M.B.N."/>
            <person name="Martinez-Rossi N.M."/>
            <person name="Martins E.C."/>
            <person name="Meidanis J."/>
            <person name="Menck C.F.M."/>
            <person name="Miyaki C.Y."/>
            <person name="Moon D.H."/>
            <person name="Moreira L.M."/>
            <person name="Novo M.T.M."/>
            <person name="Okura V.K."/>
            <person name="Oliveira M.C."/>
            <person name="Oliveira V.R."/>
            <person name="Pereira H.A."/>
            <person name="Rossi A."/>
            <person name="Sena J.A.D."/>
            <person name="Silva C."/>
            <person name="de Souza R.F."/>
            <person name="Spinola L.A.F."/>
            <person name="Takita M.A."/>
            <person name="Tamura R.E."/>
            <person name="Teixeira E.C."/>
            <person name="Tezza R.I.D."/>
            <person name="Trindade dos Santos M."/>
            <person name="Truffi D."/>
            <person name="Tsai S.M."/>
            <person name="White F.F."/>
            <person name="Setubal J.C."/>
            <person name="Kitajima J.P."/>
        </authorList>
    </citation>
    <scope>NUCLEOTIDE SEQUENCE [LARGE SCALE GENOMIC DNA]</scope>
    <source>
        <strain>306</strain>
    </source>
</reference>
<evidence type="ECO:0000255" key="1">
    <source>
        <dbReference type="HAMAP-Rule" id="MF_01350"/>
    </source>
</evidence>
<evidence type="ECO:0000305" key="2"/>
<sequence length="363" mass="40449">MNELLLNLVDPLHQWFLGLGDGGAVLWSVLKILLIAVPVIVTVAFYVVWERKLIGWMHVRHGPMYVGMGIFQAFADVFKLLFKEIVQPASSHKAMFVIAPLLTLAPAFAAWSVVPFDAKLVLSNANVGLLYLLAMTSLGVYGIILAGWASNSKYAFLGAMRSAAQVVSYEIAMGFALVGVMIASGSVNLSQIVFAQAGNSGFFDWFLIPLFPLFIVYWVSGVAETNRAPFDVVEGESEIVAGHMVEYSGGAFALFFLAEYANMILVSFLISIFFLGGWLSPIQGWVNADISPWIDWLWKGGWPWLLMKVFFFASAYIWFRASFPRYRYDQIMRLGWKVFIPLTIVWIAVTALMVFYGVIQKGV</sequence>
<keyword id="KW-0997">Cell inner membrane</keyword>
<keyword id="KW-1003">Cell membrane</keyword>
<keyword id="KW-0472">Membrane</keyword>
<keyword id="KW-0520">NAD</keyword>
<keyword id="KW-0874">Quinone</keyword>
<keyword id="KW-1278">Translocase</keyword>
<keyword id="KW-0812">Transmembrane</keyword>
<keyword id="KW-1133">Transmembrane helix</keyword>
<keyword id="KW-0830">Ubiquinone</keyword>
<gene>
    <name evidence="1" type="primary">nuoH</name>
    <name type="synonym">nqo8</name>
    <name type="ordered locus">XAC2697</name>
</gene>
<comment type="function">
    <text evidence="1">NDH-1 shuttles electrons from NADH, via FMN and iron-sulfur (Fe-S) centers, to quinones in the respiratory chain. The immediate electron acceptor for the enzyme in this species is believed to be ubiquinone. Couples the redox reaction to proton translocation (for every two electrons transferred, four hydrogen ions are translocated across the cytoplasmic membrane), and thus conserves the redox energy in a proton gradient. This subunit may bind ubiquinone.</text>
</comment>
<comment type="catalytic activity">
    <reaction evidence="1">
        <text>a quinone + NADH + 5 H(+)(in) = a quinol + NAD(+) + 4 H(+)(out)</text>
        <dbReference type="Rhea" id="RHEA:57888"/>
        <dbReference type="ChEBI" id="CHEBI:15378"/>
        <dbReference type="ChEBI" id="CHEBI:24646"/>
        <dbReference type="ChEBI" id="CHEBI:57540"/>
        <dbReference type="ChEBI" id="CHEBI:57945"/>
        <dbReference type="ChEBI" id="CHEBI:132124"/>
    </reaction>
</comment>
<comment type="subunit">
    <text evidence="1">NDH-1 is composed of 14 different subunits. Subunits NuoA, H, J, K, L, M, N constitute the membrane sector of the complex.</text>
</comment>
<comment type="subcellular location">
    <subcellularLocation>
        <location evidence="1">Cell inner membrane</location>
        <topology evidence="1">Multi-pass membrane protein</topology>
    </subcellularLocation>
</comment>
<comment type="similarity">
    <text evidence="1">Belongs to the complex I subunit 1 family.</text>
</comment>
<comment type="sequence caution" evidence="2">
    <conflict type="erroneous initiation">
        <sequence resource="EMBL-CDS" id="AAM37543"/>
    </conflict>
</comment>